<proteinExistence type="evidence at protein level"/>
<organism>
    <name type="scientific">Metridium senile</name>
    <name type="common">Brown sea anemone</name>
    <name type="synonym">Frilled sea anemone</name>
    <dbReference type="NCBI Taxonomy" id="6116"/>
    <lineage>
        <taxon>Eukaryota</taxon>
        <taxon>Metazoa</taxon>
        <taxon>Cnidaria</taxon>
        <taxon>Anthozoa</taxon>
        <taxon>Hexacorallia</taxon>
        <taxon>Actiniaria</taxon>
        <taxon>Nynantheae</taxon>
        <taxon>Metridiidae</taxon>
        <taxon>Metridium</taxon>
    </lineage>
</organism>
<name>AITX1_METSE</name>
<dbReference type="EMBL" id="ON605613">
    <property type="protein sequence ID" value="WCB99795.1"/>
    <property type="molecule type" value="mRNA"/>
</dbReference>
<dbReference type="SMR" id="P0DRC0"/>
<dbReference type="GO" id="GO:0005576">
    <property type="term" value="C:extracellular region"/>
    <property type="evidence" value="ECO:0007669"/>
    <property type="project" value="UniProtKB-SubCell"/>
</dbReference>
<dbReference type="GO" id="GO:0035792">
    <property type="term" value="C:host cell postsynaptic membrane"/>
    <property type="evidence" value="ECO:0007669"/>
    <property type="project" value="UniProtKB-KW"/>
</dbReference>
<dbReference type="GO" id="GO:0042151">
    <property type="term" value="C:nematocyst"/>
    <property type="evidence" value="ECO:0007669"/>
    <property type="project" value="UniProtKB-SubCell"/>
</dbReference>
<dbReference type="GO" id="GO:0030550">
    <property type="term" value="F:acetylcholine receptor inhibitor activity"/>
    <property type="evidence" value="ECO:0007669"/>
    <property type="project" value="UniProtKB-KW"/>
</dbReference>
<dbReference type="GO" id="GO:0090729">
    <property type="term" value="F:toxin activity"/>
    <property type="evidence" value="ECO:0007669"/>
    <property type="project" value="UniProtKB-KW"/>
</dbReference>
<accession>P0DRC0</accession>
<keyword id="KW-0008">Acetylcholine receptor inhibiting toxin</keyword>
<keyword id="KW-0165">Cleavage on pair of basic residues</keyword>
<keyword id="KW-0903">Direct protein sequencing</keyword>
<keyword id="KW-1015">Disulfide bond</keyword>
<keyword id="KW-0960">Knottin</keyword>
<keyword id="KW-0166">Nematocyst</keyword>
<keyword id="KW-0528">Neurotoxin</keyword>
<keyword id="KW-0629">Postsynaptic neurotoxin</keyword>
<keyword id="KW-0964">Secreted</keyword>
<keyword id="KW-0732">Signal</keyword>
<keyword id="KW-0800">Toxin</keyword>
<sequence length="66" mass="7457">MASKIFFVLAVFLVMSAVLPESFAGCKKLNSNCSRQYRECCHGLVCRRPNYGNGRGILWRCVKAKK</sequence>
<feature type="signal peptide" evidence="5">
    <location>
        <begin position="1"/>
        <end position="24"/>
    </location>
</feature>
<feature type="chain" id="PRO_0000459527" description="Alpha-actitoxin-Ms11a-1">
    <location>
        <begin position="25"/>
        <end position="64"/>
    </location>
</feature>
<feature type="disulfide bond" evidence="1">
    <location>
        <begin position="26"/>
        <end position="41"/>
    </location>
</feature>
<feature type="disulfide bond" evidence="1">
    <location>
        <begin position="33"/>
        <end position="46"/>
    </location>
</feature>
<feature type="disulfide bond" evidence="1">
    <location>
        <begin position="40"/>
        <end position="61"/>
    </location>
</feature>
<feature type="sequence conflict" description="In Ref. 1; AA sequence." evidence="4" ref="1">
    <original>S</original>
    <variation>T</variation>
    <location>
        <position position="34"/>
    </location>
</feature>
<protein>
    <recommendedName>
        <fullName evidence="5">Alpha-actitoxin-Ms11a-1</fullName>
        <shortName evidence="5">Alpha-AITX-Ms11a-1</shortName>
    </recommendedName>
    <alternativeName>
        <fullName evidence="3">Alpha-anmTX-Ms11a-1</fullName>
    </alternativeName>
</protein>
<evidence type="ECO:0000250" key="1">
    <source>
        <dbReference type="UniProtKB" id="P0DRC1"/>
    </source>
</evidence>
<evidence type="ECO:0000269" key="2">
    <source>
    </source>
</evidence>
<evidence type="ECO:0000303" key="3">
    <source>
    </source>
</evidence>
<evidence type="ECO:0000305" key="4"/>
<evidence type="ECO:0000305" key="5">
    <source>
    </source>
</evidence>
<reference key="1">
    <citation type="journal article" date="2022" name="Toxins">
        <title>Peptides from the sea anemone Metridium senile with modified inhibitor cystine knot (ICK) fold inhibit nicotinic acetylcholine receptors.</title>
        <authorList>
            <person name="Kasheverov I.E."/>
            <person name="Logashina Y.A."/>
            <person name="Kornilov F.D."/>
            <person name="Lushpa V.A."/>
            <person name="Maleeva E.E."/>
            <person name="Korolkova Y.V."/>
            <person name="Yu J."/>
            <person name="Zhu X."/>
            <person name="Zhangsun D."/>
            <person name="Luo S."/>
            <person name="Stensvaag K."/>
            <person name="Kudryavtsev D.S."/>
            <person name="Mineev K.S."/>
            <person name="Andreev Y.A."/>
        </authorList>
    </citation>
    <scope>NUCLEOTIDE SEQUENCE [MRNA]</scope>
    <scope>PROTEIN SEQUENCE OF 25-60</scope>
    <scope>FUNCTION</scope>
    <scope>MASS SPECTROMETRY</scope>
    <scope>RECOMBINANT EXPRESSION</scope>
    <source>
        <tissue>Tentacle</tissue>
    </source>
</reference>
<comment type="function">
    <text evidence="2">Alpha-toxins act on postsynaptic membranes, they bind to the nicotinic acetylcholine receptors (nAChR) and thus inhibit them. This toxin competes with alpha-bungarotoxin for binding to orthosteric sites on muscle-type T.carlifornicus (IC(50)=408 nM) and human alpha-7/CHRNA7 nAChRs (IC(50)=14.16 uM).</text>
</comment>
<comment type="subcellular location">
    <subcellularLocation>
        <location evidence="2">Secreted</location>
    </subcellularLocation>
    <subcellularLocation>
        <location evidence="4">Nematocyst</location>
    </subcellularLocation>
</comment>
<comment type="domain">
    <text evidence="4">The presence of a 'disulfide through disulfide knot' structurally defines this protein as a knottin.</text>
</comment>
<comment type="mass spectrometry" mass="4594.8" method="MALDI" evidence="2"/>
<comment type="miscellaneous">
    <text evidence="2">Negative results: does not show activity on rat TRPV1, human TRPV3, rat TRPA1 channels, the human ghrelin receptor, human neurotensin receptor 1, rat ASIC1a and ASIC3 channels.</text>
</comment>